<proteinExistence type="evidence at protein level"/>
<comment type="mass spectrometry"/>
<protein>
    <recommendedName>
        <fullName>Cuticle protein 14 isoform b</fullName>
    </recommendedName>
    <alternativeName>
        <fullName>LpCP14b</fullName>
    </alternativeName>
</protein>
<reference key="1">
    <citation type="journal article" date="2003" name="Comp. Biochem. Physiol.">
        <title>Cuticular proteins from the horseshoe crab, Limulus polyphemus.</title>
        <authorList>
            <person name="Ditzel N."/>
            <person name="Andersen S.O."/>
            <person name="Hoejrup P."/>
        </authorList>
    </citation>
    <scope>PROTEIN SEQUENCE</scope>
    <scope>MASS SPECTROMETRY</scope>
    <source>
        <tissue>Carapace cuticle</tissue>
    </source>
</reference>
<organism evidence="3">
    <name type="scientific">Limulus polyphemus</name>
    <name type="common">Atlantic horseshoe crab</name>
    <dbReference type="NCBI Taxonomy" id="6850"/>
    <lineage>
        <taxon>Eukaryota</taxon>
        <taxon>Metazoa</taxon>
        <taxon>Ecdysozoa</taxon>
        <taxon>Arthropoda</taxon>
        <taxon>Chelicerata</taxon>
        <taxon>Merostomata</taxon>
        <taxon>Xiphosura</taxon>
        <taxon>Limulidae</taxon>
        <taxon>Limulus</taxon>
    </lineage>
</organism>
<dbReference type="EnsemblMetazoa" id="XM_013919262.2">
    <property type="protein sequence ID" value="XP_013774716.2"/>
    <property type="gene ID" value="LOC106459632"/>
</dbReference>
<dbReference type="OrthoDB" id="6630425at2759"/>
<dbReference type="Proteomes" id="UP000694941">
    <property type="component" value="Unplaced"/>
</dbReference>
<dbReference type="GO" id="GO:0062129">
    <property type="term" value="C:chitin-based extracellular matrix"/>
    <property type="evidence" value="ECO:0007669"/>
    <property type="project" value="TreeGrafter"/>
</dbReference>
<dbReference type="GO" id="GO:0008010">
    <property type="term" value="F:structural constituent of chitin-based larval cuticle"/>
    <property type="evidence" value="ECO:0007669"/>
    <property type="project" value="TreeGrafter"/>
</dbReference>
<dbReference type="InterPro" id="IPR031311">
    <property type="entry name" value="CHIT_BIND_RR_consensus"/>
</dbReference>
<dbReference type="InterPro" id="IPR050468">
    <property type="entry name" value="Cuticle_Struct_Prot"/>
</dbReference>
<dbReference type="InterPro" id="IPR000618">
    <property type="entry name" value="Insect_cuticle"/>
</dbReference>
<dbReference type="PANTHER" id="PTHR10380">
    <property type="entry name" value="CUTICLE PROTEIN"/>
    <property type="match status" value="1"/>
</dbReference>
<dbReference type="PANTHER" id="PTHR10380:SF173">
    <property type="entry name" value="CUTICULAR PROTEIN 47EF, ISOFORM C-RELATED"/>
    <property type="match status" value="1"/>
</dbReference>
<dbReference type="Pfam" id="PF00379">
    <property type="entry name" value="Chitin_bind_4"/>
    <property type="match status" value="1"/>
</dbReference>
<dbReference type="PRINTS" id="PR00947">
    <property type="entry name" value="CUTICLE"/>
</dbReference>
<dbReference type="PROSITE" id="PS00233">
    <property type="entry name" value="CHIT_BIND_RR_1"/>
    <property type="match status" value="1"/>
</dbReference>
<dbReference type="PROSITE" id="PS51155">
    <property type="entry name" value="CHIT_BIND_RR_2"/>
    <property type="match status" value="1"/>
</dbReference>
<sequence>GYLYHPAYYYGAGASTQFKNQDAIGNYNFGYNEGHATGGTFRREFGDAFGNVKVGSYGLTDADGRRRIVTYKADASGFNANVHTNEPGTDSSKDPANTLVNKAVLPTTYYGGYYPGHYYGHYAPYHYGYY</sequence>
<accession>P83355</accession>
<keyword id="KW-0193">Cuticle</keyword>
<keyword id="KW-0903">Direct protein sequencing</keyword>
<feature type="chain" id="PRO_0000196179" description="Cuticle protein 14 isoform b">
    <location>
        <begin position="1"/>
        <end position="130"/>
    </location>
</feature>
<feature type="domain" description="Chitin-binding type R&amp;R" evidence="1">
    <location>
        <begin position="24"/>
        <end position="90"/>
    </location>
</feature>
<name>CU14B_LIMPO</name>
<evidence type="ECO:0000255" key="1">
    <source>
        <dbReference type="PROSITE-ProRule" id="PRU00497"/>
    </source>
</evidence>
<evidence type="ECO:0000269" key="2">
    <source>
    </source>
</evidence>
<evidence type="ECO:0000305" key="3"/>